<reference key="1">
    <citation type="submission" date="2007-05" db="EMBL/GenBank/DDBJ databases">
        <title>Complete sequence of chromosome of Staphylococcus aureus subsp. aureus JH9.</title>
        <authorList>
            <consortium name="US DOE Joint Genome Institute"/>
            <person name="Copeland A."/>
            <person name="Lucas S."/>
            <person name="Lapidus A."/>
            <person name="Barry K."/>
            <person name="Detter J.C."/>
            <person name="Glavina del Rio T."/>
            <person name="Hammon N."/>
            <person name="Israni S."/>
            <person name="Pitluck S."/>
            <person name="Chain P."/>
            <person name="Malfatti S."/>
            <person name="Shin M."/>
            <person name="Vergez L."/>
            <person name="Schmutz J."/>
            <person name="Larimer F."/>
            <person name="Land M."/>
            <person name="Hauser L."/>
            <person name="Kyrpides N."/>
            <person name="Kim E."/>
            <person name="Tomasz A."/>
            <person name="Richardson P."/>
        </authorList>
    </citation>
    <scope>NUCLEOTIDE SEQUENCE [LARGE SCALE GENOMIC DNA]</scope>
    <source>
        <strain>JH9</strain>
    </source>
</reference>
<proteinExistence type="inferred from homology"/>
<gene>
    <name type="primary">sigS</name>
    <name type="ordered locus">SaurJH9_1829</name>
</gene>
<name>SIGS_STAA9</name>
<protein>
    <recommendedName>
        <fullName>RNA polymerase sigma factor SigS</fullName>
    </recommendedName>
</protein>
<accession>A5ITU6</accession>
<dbReference type="EMBL" id="CP000703">
    <property type="protein sequence ID" value="ABQ49619.1"/>
    <property type="status" value="ALT_INIT"/>
    <property type="molecule type" value="Genomic_DNA"/>
</dbReference>
<dbReference type="RefSeq" id="WP_000671057.1">
    <property type="nucleotide sequence ID" value="NC_009487.1"/>
</dbReference>
<dbReference type="SMR" id="A5ITU6"/>
<dbReference type="KEGG" id="saj:SaurJH9_1829"/>
<dbReference type="HOGENOM" id="CLU_047691_20_2_9"/>
<dbReference type="GO" id="GO:0003677">
    <property type="term" value="F:DNA binding"/>
    <property type="evidence" value="ECO:0007669"/>
    <property type="project" value="UniProtKB-KW"/>
</dbReference>
<dbReference type="GO" id="GO:0016987">
    <property type="term" value="F:sigma factor activity"/>
    <property type="evidence" value="ECO:0007669"/>
    <property type="project" value="UniProtKB-KW"/>
</dbReference>
<dbReference type="GO" id="GO:0006352">
    <property type="term" value="P:DNA-templated transcription initiation"/>
    <property type="evidence" value="ECO:0007669"/>
    <property type="project" value="InterPro"/>
</dbReference>
<dbReference type="Gene3D" id="1.10.10.10">
    <property type="entry name" value="Winged helix-like DNA-binding domain superfamily/Winged helix DNA-binding domain"/>
    <property type="match status" value="1"/>
</dbReference>
<dbReference type="InterPro" id="IPR014284">
    <property type="entry name" value="RNA_pol_sigma-70_dom"/>
</dbReference>
<dbReference type="InterPro" id="IPR007627">
    <property type="entry name" value="RNA_pol_sigma70_r2"/>
</dbReference>
<dbReference type="InterPro" id="IPR013325">
    <property type="entry name" value="RNA_pol_sigma_r2"/>
</dbReference>
<dbReference type="InterPro" id="IPR016032">
    <property type="entry name" value="Sig_transdc_resp-reg_C-effctor"/>
</dbReference>
<dbReference type="InterPro" id="IPR036388">
    <property type="entry name" value="WH-like_DNA-bd_sf"/>
</dbReference>
<dbReference type="NCBIfam" id="TIGR02937">
    <property type="entry name" value="sigma70-ECF"/>
    <property type="match status" value="1"/>
</dbReference>
<dbReference type="Pfam" id="PF04542">
    <property type="entry name" value="Sigma70_r2"/>
    <property type="match status" value="1"/>
</dbReference>
<dbReference type="SUPFAM" id="SSF46894">
    <property type="entry name" value="C-terminal effector domain of the bipartite response regulators"/>
    <property type="match status" value="1"/>
</dbReference>
<dbReference type="SUPFAM" id="SSF88946">
    <property type="entry name" value="Sigma2 domain of RNA polymerase sigma factors"/>
    <property type="match status" value="1"/>
</dbReference>
<sequence>MKFNDVYNKHHKIIHHLLKKYNISYNYDEYYQLLLIKMWQLSQIYKPSSKQSLSSFLFTRLNYYLIDLFRQQNQLKDVILCENNSPTLTEQPTYFNEHDLRLQDIFKLLNHRERLWLKLYLEGYKQFEIAEIMSLSLSTIKLIKMSVKRKCQHNFN</sequence>
<evidence type="ECO:0000250" key="1"/>
<evidence type="ECO:0000305" key="2"/>
<keyword id="KW-0238">DNA-binding</keyword>
<keyword id="KW-0731">Sigma factor</keyword>
<keyword id="KW-0804">Transcription</keyword>
<keyword id="KW-0805">Transcription regulation</keyword>
<comment type="function">
    <text evidence="1">Sigma factors are initiation factors that promote the attachment of RNA polymerase to specific initiation sites and are then released. Sigma-S contributes to the protection against external stress, thus playing a role in cellular fitness and survival (By similarity).</text>
</comment>
<comment type="similarity">
    <text evidence="2">Belongs to the sigma-70 factor family.</text>
</comment>
<comment type="sequence caution" evidence="2">
    <conflict type="erroneous initiation">
        <sequence resource="EMBL-CDS" id="ABQ49619"/>
    </conflict>
</comment>
<organism>
    <name type="scientific">Staphylococcus aureus (strain JH9)</name>
    <dbReference type="NCBI Taxonomy" id="359786"/>
    <lineage>
        <taxon>Bacteria</taxon>
        <taxon>Bacillati</taxon>
        <taxon>Bacillota</taxon>
        <taxon>Bacilli</taxon>
        <taxon>Bacillales</taxon>
        <taxon>Staphylococcaceae</taxon>
        <taxon>Staphylococcus</taxon>
    </lineage>
</organism>
<feature type="chain" id="PRO_0000367447" description="RNA polymerase sigma factor SigS">
    <location>
        <begin position="1"/>
        <end position="156"/>
    </location>
</feature>
<feature type="DNA-binding region" description="H-T-H motif" evidence="1">
    <location>
        <begin position="126"/>
        <end position="145"/>
    </location>
</feature>
<feature type="short sequence motif" description="Polymerase core binding">
    <location>
        <begin position="29"/>
        <end position="44"/>
    </location>
</feature>